<dbReference type="PIR" id="A38824">
    <property type="entry name" value="A38824"/>
</dbReference>
<dbReference type="BMRB" id="P69135"/>
<dbReference type="GO" id="GO:0005576">
    <property type="term" value="C:extracellular region"/>
    <property type="evidence" value="ECO:0007669"/>
    <property type="project" value="UniProtKB-SubCell"/>
</dbReference>
<dbReference type="GO" id="GO:0042742">
    <property type="term" value="P:defense response to bacterium"/>
    <property type="evidence" value="ECO:0007669"/>
    <property type="project" value="UniProtKB-KW"/>
</dbReference>
<feature type="peptide" id="PRO_0000044450" description="Tachyplesin-1">
    <location>
        <begin position="1"/>
        <end position="17"/>
    </location>
</feature>
<feature type="modified residue" description="Arginine amide" evidence="1">
    <location>
        <position position="17"/>
    </location>
</feature>
<feature type="disulfide bond">
    <location>
        <begin position="3"/>
        <end position="16"/>
    </location>
</feature>
<feature type="disulfide bond">
    <location>
        <begin position="7"/>
        <end position="12"/>
    </location>
</feature>
<sequence length="17" mass="2269">KWCFRVCYRGICYRRCR</sequence>
<keyword id="KW-0027">Amidation</keyword>
<keyword id="KW-0044">Antibiotic</keyword>
<keyword id="KW-0929">Antimicrobial</keyword>
<keyword id="KW-0903">Direct protein sequencing</keyword>
<keyword id="KW-1015">Disulfide bond</keyword>
<keyword id="KW-0964">Secreted</keyword>
<proteinExistence type="evidence at protein level"/>
<accession>P69135</accession>
<accession>P23684</accession>
<evidence type="ECO:0000269" key="1">
    <source>
    </source>
</evidence>
<evidence type="ECO:0000305" key="2"/>
<name>TAC1_TACGI</name>
<protein>
    <recommendedName>
        <fullName>Tachyplesin-1</fullName>
    </recommendedName>
    <alternativeName>
        <fullName>Tachyplesin I</fullName>
    </alternativeName>
</protein>
<comment type="function">
    <text>Significantly inhibits the growth of Gram-negative and Gram-positive bacteria.</text>
</comment>
<comment type="subcellular location">
    <subcellularLocation>
        <location>Secreted</location>
    </subcellularLocation>
</comment>
<comment type="tissue specificity">
    <text>Hemocytes.</text>
</comment>
<comment type="similarity">
    <text evidence="2">Belongs to the tachyplesin/polyphemusin family.</text>
</comment>
<reference key="1">
    <citation type="journal article" date="1990" name="J. Biochem.">
        <title>Tachyplesins isolated from hemocytes of Southeast Asian horseshoe crabs (Carcinoscorpius rotundicauda and Tachypleus gigas): identification of a new tachyplesin, tachyplesin III, and a processing intermediate of its precursor.</title>
        <authorList>
            <person name="Muta T."/>
            <person name="Fujimoto T."/>
            <person name="Nakajima H."/>
            <person name="Iwanaga S."/>
        </authorList>
    </citation>
    <scope>PROTEIN SEQUENCE</scope>
    <scope>AMIDATION AT ARG-17</scope>
</reference>
<organism>
    <name type="scientific">Tachypleus gigas</name>
    <name type="common">Southeast Asian horseshoe crab</name>
    <dbReference type="NCBI Taxonomy" id="6852"/>
    <lineage>
        <taxon>Eukaryota</taxon>
        <taxon>Metazoa</taxon>
        <taxon>Ecdysozoa</taxon>
        <taxon>Arthropoda</taxon>
        <taxon>Chelicerata</taxon>
        <taxon>Merostomata</taxon>
        <taxon>Xiphosura</taxon>
        <taxon>Limulidae</taxon>
        <taxon>Tachypleus</taxon>
    </lineage>
</organism>